<reference key="1">
    <citation type="journal article" date="2007" name="Nat. Biotechnol.">
        <title>Bacterial glycosidases for the production of universal red blood cells.</title>
        <authorList>
            <person name="Liu Q.P."/>
            <person name="Sulzenbacher G."/>
            <person name="Yuan H."/>
            <person name="Bennett E.P."/>
            <person name="Pietz G."/>
            <person name="Saunders K."/>
            <person name="Spence J."/>
            <person name="Nudelman E."/>
            <person name="Levery S.B."/>
            <person name="White T."/>
            <person name="Neveu J.M."/>
            <person name="Lane W.S."/>
            <person name="Bourne Y."/>
            <person name="Olsson M.L."/>
            <person name="Henrissat B."/>
            <person name="Clausen H."/>
        </authorList>
    </citation>
    <scope>NUCLEOTIDE SEQUENCE [GENOMIC DNA]</scope>
    <scope>ENZYME ACTIVITY</scope>
</reference>
<reference key="2">
    <citation type="journal article" date="2005" name="Science">
        <title>Extensive DNA inversions in the B. fragilis genome control variable gene expression.</title>
        <authorList>
            <person name="Cerdeno-Tarraga A.-M."/>
            <person name="Patrick S."/>
            <person name="Crossman L.C."/>
            <person name="Blakely G."/>
            <person name="Abratt V."/>
            <person name="Lennard N."/>
            <person name="Poxton I."/>
            <person name="Duerden B."/>
            <person name="Harris B."/>
            <person name="Quail M.A."/>
            <person name="Barron A."/>
            <person name="Clark L."/>
            <person name="Corton C."/>
            <person name="Doggett J."/>
            <person name="Holden M.T.G."/>
            <person name="Larke N."/>
            <person name="Line A."/>
            <person name="Lord A."/>
            <person name="Norbertczak H."/>
            <person name="Ormond D."/>
            <person name="Price C."/>
            <person name="Rabbinowitsch E."/>
            <person name="Woodward J."/>
            <person name="Barrell B.G."/>
            <person name="Parkhill J."/>
        </authorList>
    </citation>
    <scope>NUCLEOTIDE SEQUENCE [LARGE SCALE GENOMIC DNA]</scope>
    <source>
        <strain>ATCC 25285 / DSM 2151 / CCUG 4856 / JCM 11019 / LMG 10263 / NCTC 9343 / Onslow / VPI 2553 / EN-2</strain>
    </source>
</reference>
<sequence>MKTPSQTHVLGLAHPPLPMVRLAFIGLGNRGVLTLQRYLQIEGVEIKALCEIREGNLVKAQKILREAGYPQPDGYTGPDGWKRMCERDDIDLVFICTDWLTHTPMAVYSMEHGKHVAIEVPAAMTVEECWKLVDTAEKTRQHCMMLENCCYDPFALTTLNMAQQGVFGEITHVEGAYIHDLRSIYFADESKGGFHNHWGKKYSIEHTGNPYPTHGLGPVCQILNIHRGDRMNYLVSLSSLQAGMTEYARKNFGADSPEARQKYLLGDMNTTLIQTVKGKSIMIQYNVVTPRPYSRLHTVCGTKGFAQKYPVPSIALEPDAGSPLEGKALEEIMERYKHPFTATFGTEAHRRNLPNEMNYVMDCRLIYCLRNGLPLDMDVYDAAEWSCITELSEQSVLNGSIPVEIPDFTRGAWKKCHISRTSDLY</sequence>
<dbReference type="EC" id="3.2.1.49"/>
<dbReference type="EMBL" id="AM039447">
    <property type="protein sequence ID" value="CAJ01379.1"/>
    <property type="molecule type" value="Genomic_DNA"/>
</dbReference>
<dbReference type="EMBL" id="CR626927">
    <property type="protein sequence ID" value="CAH06617.1"/>
    <property type="molecule type" value="Genomic_DNA"/>
</dbReference>
<dbReference type="RefSeq" id="WP_005813119.1">
    <property type="nucleotide sequence ID" value="NZ_UFTH01000001.1"/>
</dbReference>
<dbReference type="SMR" id="Q5LGW9"/>
<dbReference type="CAZy" id="GH109">
    <property type="family name" value="Glycoside Hydrolase Family 109"/>
</dbReference>
<dbReference type="PaxDb" id="272559-BF9343_0836"/>
<dbReference type="KEGG" id="bfs:BF9343_0836"/>
<dbReference type="eggNOG" id="COG0673">
    <property type="taxonomic scope" value="Bacteria"/>
</dbReference>
<dbReference type="HOGENOM" id="CLU_046965_0_0_10"/>
<dbReference type="Proteomes" id="UP000006731">
    <property type="component" value="Chromosome"/>
</dbReference>
<dbReference type="GO" id="GO:0008456">
    <property type="term" value="F:alpha-N-acetylgalactosaminidase activity"/>
    <property type="evidence" value="ECO:0007669"/>
    <property type="project" value="UniProtKB-EC"/>
</dbReference>
<dbReference type="GO" id="GO:0000166">
    <property type="term" value="F:nucleotide binding"/>
    <property type="evidence" value="ECO:0007669"/>
    <property type="project" value="InterPro"/>
</dbReference>
<dbReference type="Gene3D" id="3.30.360.10">
    <property type="entry name" value="Dihydrodipicolinate Reductase, domain 2"/>
    <property type="match status" value="1"/>
</dbReference>
<dbReference type="Gene3D" id="3.40.50.720">
    <property type="entry name" value="NAD(P)-binding Rossmann-like Domain"/>
    <property type="match status" value="1"/>
</dbReference>
<dbReference type="InterPro" id="IPR000683">
    <property type="entry name" value="Gfo/Idh/MocA-like_OxRdtase_N"/>
</dbReference>
<dbReference type="InterPro" id="IPR050463">
    <property type="entry name" value="Gfo/Idh/MocA_oxidrdct_glycsds"/>
</dbReference>
<dbReference type="InterPro" id="IPR049303">
    <property type="entry name" value="Glyco_hydro_109_C"/>
</dbReference>
<dbReference type="InterPro" id="IPR036291">
    <property type="entry name" value="NAD(P)-bd_dom_sf"/>
</dbReference>
<dbReference type="PANTHER" id="PTHR43818">
    <property type="entry name" value="BCDNA.GH03377"/>
    <property type="match status" value="1"/>
</dbReference>
<dbReference type="PANTHER" id="PTHR43818:SF1">
    <property type="entry name" value="GLYCOSYL HYDROLASE FAMILY 109 PROTEIN"/>
    <property type="match status" value="1"/>
</dbReference>
<dbReference type="Pfam" id="PF01408">
    <property type="entry name" value="GFO_IDH_MocA"/>
    <property type="match status" value="1"/>
</dbReference>
<dbReference type="Pfam" id="PF21252">
    <property type="entry name" value="Glyco_hydro_109_C"/>
    <property type="match status" value="1"/>
</dbReference>
<dbReference type="SUPFAM" id="SSF51735">
    <property type="entry name" value="NAD(P)-binding Rossmann-fold domains"/>
    <property type="match status" value="1"/>
</dbReference>
<protein>
    <recommendedName>
        <fullName>Alpha-N-acetylgalactosaminidase</fullName>
        <ecNumber>3.2.1.49</ecNumber>
    </recommendedName>
    <alternativeName>
        <fullName>Glycosyl hydrolase family 109 protein</fullName>
    </alternativeName>
</protein>
<evidence type="ECO:0000250" key="1"/>
<evidence type="ECO:0000269" key="2">
    <source>
    </source>
</evidence>
<evidence type="ECO:0000305" key="3"/>
<keyword id="KW-0326">Glycosidase</keyword>
<keyword id="KW-0378">Hydrolase</keyword>
<keyword id="KW-0520">NAD</keyword>
<comment type="function">
    <text>Glycosidase that has specific alpha-N-acetylgalactosaminidase activity.</text>
</comment>
<comment type="catalytic activity">
    <reaction evidence="2">
        <text>Cleavage of non-reducing alpha-(1-&gt;3)-N-acetylgalactosamine residues from human blood group A and AB mucin glycoproteins, Forssman hapten and blood group A lacto series glycolipids.</text>
        <dbReference type="EC" id="3.2.1.49"/>
    </reaction>
</comment>
<comment type="cofactor">
    <cofactor evidence="1">
        <name>NAD(+)</name>
        <dbReference type="ChEBI" id="CHEBI:57540"/>
    </cofactor>
    <text evidence="1">Binds 1 NAD(+) per subunit. The NAD(+) cannot dissociate.</text>
</comment>
<comment type="similarity">
    <text evidence="3">Belongs to the Gfo/Idh/MocA family. Glycosyl hydrolase 109 subfamily.</text>
</comment>
<feature type="chain" id="PRO_0000348547" description="Alpha-N-acetylgalactosaminidase">
    <location>
        <begin position="1"/>
        <end position="425"/>
    </location>
</feature>
<feature type="binding site" evidence="1">
    <location>
        <begin position="29"/>
        <end position="30"/>
    </location>
    <ligand>
        <name>NAD(+)</name>
        <dbReference type="ChEBI" id="CHEBI:57540"/>
    </ligand>
</feature>
<feature type="binding site" evidence="1">
    <location>
        <position position="51"/>
    </location>
    <ligand>
        <name>NAD(+)</name>
        <dbReference type="ChEBI" id="CHEBI:57540"/>
    </ligand>
</feature>
<feature type="binding site" evidence="1">
    <location>
        <begin position="99"/>
        <end position="102"/>
    </location>
    <ligand>
        <name>NAD(+)</name>
        <dbReference type="ChEBI" id="CHEBI:57540"/>
    </ligand>
</feature>
<feature type="binding site" evidence="1">
    <location>
        <begin position="119"/>
        <end position="120"/>
    </location>
    <ligand>
        <name>NAD(+)</name>
        <dbReference type="ChEBI" id="CHEBI:57540"/>
    </ligand>
</feature>
<feature type="binding site" evidence="1">
    <location>
        <position position="148"/>
    </location>
    <ligand>
        <name>NAD(+)</name>
        <dbReference type="ChEBI" id="CHEBI:57540"/>
    </ligand>
</feature>
<feature type="binding site" evidence="1">
    <location>
        <position position="177"/>
    </location>
    <ligand>
        <name>substrate</name>
    </ligand>
</feature>
<feature type="binding site" evidence="1">
    <location>
        <begin position="194"/>
        <end position="198"/>
    </location>
    <ligand>
        <name>NAD(+)</name>
        <dbReference type="ChEBI" id="CHEBI:57540"/>
    </ligand>
</feature>
<feature type="binding site" evidence="1">
    <location>
        <begin position="211"/>
        <end position="214"/>
    </location>
    <ligand>
        <name>substrate</name>
    </ligand>
</feature>
<feature type="binding site" evidence="1">
    <location>
        <position position="211"/>
    </location>
    <ligand>
        <name>NAD(+)</name>
        <dbReference type="ChEBI" id="CHEBI:57540"/>
    </ligand>
</feature>
<feature type="binding site" evidence="1">
    <location>
        <position position="293"/>
    </location>
    <ligand>
        <name>substrate</name>
    </ligand>
</feature>
<proteinExistence type="inferred from homology"/>
<gene>
    <name type="ordered locus">BF0874</name>
</gene>
<name>G1092_BACFN</name>
<organism>
    <name type="scientific">Bacteroides fragilis (strain ATCC 25285 / DSM 2151 / CCUG 4856 / JCM 11019 / LMG 10263 / NCTC 9343 / Onslow / VPI 2553 / EN-2)</name>
    <dbReference type="NCBI Taxonomy" id="272559"/>
    <lineage>
        <taxon>Bacteria</taxon>
        <taxon>Pseudomonadati</taxon>
        <taxon>Bacteroidota</taxon>
        <taxon>Bacteroidia</taxon>
        <taxon>Bacteroidales</taxon>
        <taxon>Bacteroidaceae</taxon>
        <taxon>Bacteroides</taxon>
    </lineage>
</organism>
<accession>Q5LGW9</accession>
<accession>A4Q8G0</accession>